<proteinExistence type="evidence at transcript level"/>
<reference key="1">
    <citation type="journal article" date="2005" name="Genome Res.">
        <title>Sequence, annotation, and analysis of synteny between rice chromosome 3 and diverged grass species.</title>
        <authorList>
            <consortium name="The rice chromosome 3 sequencing consortium"/>
            <person name="Buell C.R."/>
            <person name="Yuan Q."/>
            <person name="Ouyang S."/>
            <person name="Liu J."/>
            <person name="Zhu W."/>
            <person name="Wang A."/>
            <person name="Maiti R."/>
            <person name="Haas B."/>
            <person name="Wortman J."/>
            <person name="Pertea M."/>
            <person name="Jones K.M."/>
            <person name="Kim M."/>
            <person name="Overton L."/>
            <person name="Tsitrin T."/>
            <person name="Fadrosh D."/>
            <person name="Bera J."/>
            <person name="Weaver B."/>
            <person name="Jin S."/>
            <person name="Johri S."/>
            <person name="Reardon M."/>
            <person name="Webb K."/>
            <person name="Hill J."/>
            <person name="Moffat K."/>
            <person name="Tallon L."/>
            <person name="Van Aken S."/>
            <person name="Lewis M."/>
            <person name="Utterback T."/>
            <person name="Feldblyum T."/>
            <person name="Zismann V."/>
            <person name="Iobst S."/>
            <person name="Hsiao J."/>
            <person name="de Vazeille A.R."/>
            <person name="Salzberg S.L."/>
            <person name="White O."/>
            <person name="Fraser C.M."/>
            <person name="Yu Y."/>
            <person name="Kim H."/>
            <person name="Rambo T."/>
            <person name="Currie J."/>
            <person name="Collura K."/>
            <person name="Kernodle-Thompson S."/>
            <person name="Wei F."/>
            <person name="Kudrna K."/>
            <person name="Ammiraju J.S.S."/>
            <person name="Luo M."/>
            <person name="Goicoechea J.L."/>
            <person name="Wing R.A."/>
            <person name="Henry D."/>
            <person name="Oates R."/>
            <person name="Palmer M."/>
            <person name="Pries G."/>
            <person name="Saski C."/>
            <person name="Simmons J."/>
            <person name="Soderlund C."/>
            <person name="Nelson W."/>
            <person name="de la Bastide M."/>
            <person name="Spiegel L."/>
            <person name="Nascimento L."/>
            <person name="Huang E."/>
            <person name="Preston R."/>
            <person name="Zutavern T."/>
            <person name="Palmer L."/>
            <person name="O'Shaughnessy A."/>
            <person name="Dike S."/>
            <person name="McCombie W.R."/>
            <person name="Minx P."/>
            <person name="Cordum H."/>
            <person name="Wilson R."/>
            <person name="Jin W."/>
            <person name="Lee H.R."/>
            <person name="Jiang J."/>
            <person name="Jackson S."/>
        </authorList>
    </citation>
    <scope>NUCLEOTIDE SEQUENCE [LARGE SCALE GENOMIC DNA]</scope>
    <source>
        <strain>cv. Nipponbare</strain>
    </source>
</reference>
<reference key="2">
    <citation type="journal article" date="2005" name="Nature">
        <title>The map-based sequence of the rice genome.</title>
        <authorList>
            <consortium name="International rice genome sequencing project (IRGSP)"/>
        </authorList>
    </citation>
    <scope>NUCLEOTIDE SEQUENCE [LARGE SCALE GENOMIC DNA]</scope>
    <source>
        <strain>cv. Nipponbare</strain>
    </source>
</reference>
<reference key="3">
    <citation type="journal article" date="2008" name="Nucleic Acids Res.">
        <title>The rice annotation project database (RAP-DB): 2008 update.</title>
        <authorList>
            <consortium name="The rice annotation project (RAP)"/>
        </authorList>
    </citation>
    <scope>GENOME REANNOTATION</scope>
    <source>
        <strain>cv. Nipponbare</strain>
    </source>
</reference>
<reference key="4">
    <citation type="journal article" date="2013" name="Rice">
        <title>Improvement of the Oryza sativa Nipponbare reference genome using next generation sequence and optical map data.</title>
        <authorList>
            <person name="Kawahara Y."/>
            <person name="de la Bastide M."/>
            <person name="Hamilton J.P."/>
            <person name="Kanamori H."/>
            <person name="McCombie W.R."/>
            <person name="Ouyang S."/>
            <person name="Schwartz D.C."/>
            <person name="Tanaka T."/>
            <person name="Wu J."/>
            <person name="Zhou S."/>
            <person name="Childs K.L."/>
            <person name="Davidson R.M."/>
            <person name="Lin H."/>
            <person name="Quesada-Ocampo L."/>
            <person name="Vaillancourt B."/>
            <person name="Sakai H."/>
            <person name="Lee S.S."/>
            <person name="Kim J."/>
            <person name="Numa H."/>
            <person name="Itoh T."/>
            <person name="Buell C.R."/>
            <person name="Matsumoto T."/>
        </authorList>
    </citation>
    <scope>GENOME REANNOTATION</scope>
    <source>
        <strain>cv. Nipponbare</strain>
    </source>
</reference>
<reference key="5">
    <citation type="journal article" date="2005" name="PLoS Biol.">
        <title>The genomes of Oryza sativa: a history of duplications.</title>
        <authorList>
            <person name="Yu J."/>
            <person name="Wang J."/>
            <person name="Lin W."/>
            <person name="Li S."/>
            <person name="Li H."/>
            <person name="Zhou J."/>
            <person name="Ni P."/>
            <person name="Dong W."/>
            <person name="Hu S."/>
            <person name="Zeng C."/>
            <person name="Zhang J."/>
            <person name="Zhang Y."/>
            <person name="Li R."/>
            <person name="Xu Z."/>
            <person name="Li S."/>
            <person name="Li X."/>
            <person name="Zheng H."/>
            <person name="Cong L."/>
            <person name="Lin L."/>
            <person name="Yin J."/>
            <person name="Geng J."/>
            <person name="Li G."/>
            <person name="Shi J."/>
            <person name="Liu J."/>
            <person name="Lv H."/>
            <person name="Li J."/>
            <person name="Wang J."/>
            <person name="Deng Y."/>
            <person name="Ran L."/>
            <person name="Shi X."/>
            <person name="Wang X."/>
            <person name="Wu Q."/>
            <person name="Li C."/>
            <person name="Ren X."/>
            <person name="Wang J."/>
            <person name="Wang X."/>
            <person name="Li D."/>
            <person name="Liu D."/>
            <person name="Zhang X."/>
            <person name="Ji Z."/>
            <person name="Zhao W."/>
            <person name="Sun Y."/>
            <person name="Zhang Z."/>
            <person name="Bao J."/>
            <person name="Han Y."/>
            <person name="Dong L."/>
            <person name="Ji J."/>
            <person name="Chen P."/>
            <person name="Wu S."/>
            <person name="Liu J."/>
            <person name="Xiao Y."/>
            <person name="Bu D."/>
            <person name="Tan J."/>
            <person name="Yang L."/>
            <person name="Ye C."/>
            <person name="Zhang J."/>
            <person name="Xu J."/>
            <person name="Zhou Y."/>
            <person name="Yu Y."/>
            <person name="Zhang B."/>
            <person name="Zhuang S."/>
            <person name="Wei H."/>
            <person name="Liu B."/>
            <person name="Lei M."/>
            <person name="Yu H."/>
            <person name="Li Y."/>
            <person name="Xu H."/>
            <person name="Wei S."/>
            <person name="He X."/>
            <person name="Fang L."/>
            <person name="Zhang Z."/>
            <person name="Zhang Y."/>
            <person name="Huang X."/>
            <person name="Su Z."/>
            <person name="Tong W."/>
            <person name="Li J."/>
            <person name="Tong Z."/>
            <person name="Li S."/>
            <person name="Ye J."/>
            <person name="Wang L."/>
            <person name="Fang L."/>
            <person name="Lei T."/>
            <person name="Chen C.-S."/>
            <person name="Chen H.-C."/>
            <person name="Xu Z."/>
            <person name="Li H."/>
            <person name="Huang H."/>
            <person name="Zhang F."/>
            <person name="Xu H."/>
            <person name="Li N."/>
            <person name="Zhao C."/>
            <person name="Li S."/>
            <person name="Dong L."/>
            <person name="Huang Y."/>
            <person name="Li L."/>
            <person name="Xi Y."/>
            <person name="Qi Q."/>
            <person name="Li W."/>
            <person name="Zhang B."/>
            <person name="Hu W."/>
            <person name="Zhang Y."/>
            <person name="Tian X."/>
            <person name="Jiao Y."/>
            <person name="Liang X."/>
            <person name="Jin J."/>
            <person name="Gao L."/>
            <person name="Zheng W."/>
            <person name="Hao B."/>
            <person name="Liu S.-M."/>
            <person name="Wang W."/>
            <person name="Yuan L."/>
            <person name="Cao M."/>
            <person name="McDermott J."/>
            <person name="Samudrala R."/>
            <person name="Wang J."/>
            <person name="Wong G.K.-S."/>
            <person name="Yang H."/>
        </authorList>
    </citation>
    <scope>NUCLEOTIDE SEQUENCE [LARGE SCALE GENOMIC DNA]</scope>
    <source>
        <strain>cv. Nipponbare</strain>
    </source>
</reference>
<reference key="6">
    <citation type="journal article" date="2003" name="Science">
        <title>Collection, mapping, and annotation of over 28,000 cDNA clones from japonica rice.</title>
        <authorList>
            <consortium name="The rice full-length cDNA consortium"/>
        </authorList>
    </citation>
    <scope>NUCLEOTIDE SEQUENCE [LARGE SCALE MRNA]</scope>
    <source>
        <strain>cv. Nipponbare</strain>
    </source>
</reference>
<reference key="7">
    <citation type="journal article" date="2006" name="Plant Physiol.">
        <title>Genome-wide analysis of basic/helix-loop-helix transcription factor family in rice and Arabidopsis.</title>
        <authorList>
            <person name="Li X."/>
            <person name="Duan X."/>
            <person name="Jiang H."/>
            <person name="Sun Y."/>
            <person name="Tang Y."/>
            <person name="Yuan Z."/>
            <person name="Guo J."/>
            <person name="Liang W."/>
            <person name="Chen L."/>
            <person name="Yin J."/>
            <person name="Ma H."/>
            <person name="Wang J."/>
            <person name="Zhang D."/>
        </authorList>
    </citation>
    <scope>GENE FAMILY</scope>
    <scope>NOMENCLATURE</scope>
</reference>
<reference key="8">
    <citation type="journal article" date="2010" name="BMC Plant Biol.">
        <title>Identification of a novel iron regulated basic helix-loop-helix protein involved in Fe homeostasis in Oryza sativa.</title>
        <authorList>
            <person name="Zheng L."/>
            <person name="Ying Y."/>
            <person name="Wang L."/>
            <person name="Wang F."/>
            <person name="Whelan J."/>
            <person name="Shou H."/>
        </authorList>
    </citation>
    <scope>FUNCTION</scope>
    <scope>SUBCELLULAR LOCATION</scope>
    <scope>INDUCTION BY IRON DEFICIENCY</scope>
</reference>
<dbReference type="EMBL" id="AC084762">
    <property type="protein sequence ID" value="AAL58252.1"/>
    <property type="molecule type" value="Genomic_DNA"/>
</dbReference>
<dbReference type="EMBL" id="DP000009">
    <property type="protein sequence ID" value="ABF96248.1"/>
    <property type="molecule type" value="Genomic_DNA"/>
</dbReference>
<dbReference type="EMBL" id="DP000009">
    <property type="protein sequence ID" value="ABF96249.1"/>
    <property type="molecule type" value="Genomic_DNA"/>
</dbReference>
<dbReference type="EMBL" id="AP008209">
    <property type="protein sequence ID" value="BAF12148.1"/>
    <property type="molecule type" value="Genomic_DNA"/>
</dbReference>
<dbReference type="EMBL" id="CM000140">
    <property type="protein sequence ID" value="EEE59148.1"/>
    <property type="molecule type" value="Genomic_DNA"/>
</dbReference>
<dbReference type="EMBL" id="AK061515">
    <property type="protein sequence ID" value="BAG87978.1"/>
    <property type="molecule type" value="mRNA"/>
</dbReference>
<dbReference type="EMBL" id="AK068704">
    <property type="protein sequence ID" value="BAG91038.1"/>
    <property type="molecule type" value="mRNA"/>
</dbReference>
<dbReference type="EMBL" id="AP014959">
    <property type="protein sequence ID" value="BAS84435.1"/>
    <property type="molecule type" value="Genomic_DNA"/>
</dbReference>
<dbReference type="RefSeq" id="XP_015633301.1">
    <property type="nucleotide sequence ID" value="XM_015777815.1"/>
</dbReference>
<dbReference type="RefSeq" id="XP_015633302.1">
    <property type="nucleotide sequence ID" value="XM_015777816.1"/>
</dbReference>
<dbReference type="SMR" id="Q10KL8"/>
<dbReference type="FunCoup" id="Q10KL8">
    <property type="interactions" value="525"/>
</dbReference>
<dbReference type="STRING" id="39947.Q10KL8"/>
<dbReference type="PaxDb" id="39947-Q10KL8"/>
<dbReference type="EnsemblPlants" id="Os03t0379300-01">
    <property type="protein sequence ID" value="Os03t0379300-01"/>
    <property type="gene ID" value="Os03g0379300"/>
</dbReference>
<dbReference type="EnsemblPlants" id="Os03t0379300-02">
    <property type="protein sequence ID" value="Os03t0379300-02"/>
    <property type="gene ID" value="Os03g0379300"/>
</dbReference>
<dbReference type="Gramene" id="Os03t0379300-01">
    <property type="protein sequence ID" value="Os03t0379300-01"/>
    <property type="gene ID" value="Os03g0379300"/>
</dbReference>
<dbReference type="Gramene" id="Os03t0379300-02">
    <property type="protein sequence ID" value="Os03t0379300-02"/>
    <property type="gene ID" value="Os03g0379300"/>
</dbReference>
<dbReference type="KEGG" id="dosa:Os03g0379300"/>
<dbReference type="eggNOG" id="ENOG502RYQ6">
    <property type="taxonomic scope" value="Eukaryota"/>
</dbReference>
<dbReference type="HOGENOM" id="CLU_053417_1_0_1"/>
<dbReference type="InParanoid" id="Q10KL8"/>
<dbReference type="OMA" id="KELTMPH"/>
<dbReference type="OrthoDB" id="1931098at2759"/>
<dbReference type="Proteomes" id="UP000000763">
    <property type="component" value="Chromosome 3"/>
</dbReference>
<dbReference type="Proteomes" id="UP000007752">
    <property type="component" value="Chromosome 3"/>
</dbReference>
<dbReference type="Proteomes" id="UP000059680">
    <property type="component" value="Chromosome 3"/>
</dbReference>
<dbReference type="GO" id="GO:0005634">
    <property type="term" value="C:nucleus"/>
    <property type="evidence" value="ECO:0007669"/>
    <property type="project" value="UniProtKB-SubCell"/>
</dbReference>
<dbReference type="GO" id="GO:0003677">
    <property type="term" value="F:DNA binding"/>
    <property type="evidence" value="ECO:0007669"/>
    <property type="project" value="UniProtKB-KW"/>
</dbReference>
<dbReference type="GO" id="GO:0046983">
    <property type="term" value="F:protein dimerization activity"/>
    <property type="evidence" value="ECO:0007669"/>
    <property type="project" value="InterPro"/>
</dbReference>
<dbReference type="Gene3D" id="4.10.280.10">
    <property type="entry name" value="Helix-loop-helix DNA-binding domain"/>
    <property type="match status" value="1"/>
</dbReference>
<dbReference type="InterPro" id="IPR011598">
    <property type="entry name" value="bHLH_dom"/>
</dbReference>
<dbReference type="InterPro" id="IPR036638">
    <property type="entry name" value="HLH_DNA-bd_sf"/>
</dbReference>
<dbReference type="PANTHER" id="PTHR47075">
    <property type="entry name" value="TRANSCRIPTION FACTOR BHLH47"/>
    <property type="match status" value="1"/>
</dbReference>
<dbReference type="PANTHER" id="PTHR47075:SF9">
    <property type="entry name" value="TRANSCRIPTION FACTOR BHLH47"/>
    <property type="match status" value="1"/>
</dbReference>
<dbReference type="Pfam" id="PF23177">
    <property type="entry name" value="bHLH_IRO3"/>
    <property type="match status" value="1"/>
</dbReference>
<dbReference type="SUPFAM" id="SSF47459">
    <property type="entry name" value="HLH, helix-loop-helix DNA-binding domain"/>
    <property type="match status" value="1"/>
</dbReference>
<dbReference type="PROSITE" id="PS50888">
    <property type="entry name" value="BHLH"/>
    <property type="match status" value="1"/>
</dbReference>
<sequence>MVPSERGDVATAIRPAAADKLVHGPISDKKCRKKVPRKVHKSEREKLKRGHLNDLFGELGNMLEADRQSNGKACILTDTTRILRDLLSQVKSLRQENSTLQNESNYVTMERNELQDENGALRSEISDLQNELRMRATGSPGWGHGATGSPLPVPPSPGTVFPSQQPMQPSPMTTSTVFPLQQPLPQPTVIEPSARQPLELKLFLEAPPAEDPEPSEDQEAPNNVARPQPRYPTEASSWPISLGLPRMEDEQM</sequence>
<feature type="chain" id="PRO_0000448627" description="Protein IRON-RELATED TRANSCRIPTION FACTOR 3">
    <location>
        <begin position="1"/>
        <end position="252"/>
    </location>
</feature>
<feature type="domain" description="bHLH" evidence="2">
    <location>
        <begin position="36"/>
        <end position="86"/>
    </location>
</feature>
<feature type="region of interest" description="Basic motif" evidence="2">
    <location>
        <begin position="36"/>
        <end position="49"/>
    </location>
</feature>
<feature type="region of interest" description="Helix-loop-helix motif" evidence="2">
    <location>
        <begin position="50"/>
        <end position="86"/>
    </location>
</feature>
<feature type="region of interest" description="Disordered" evidence="3">
    <location>
        <begin position="135"/>
        <end position="252"/>
    </location>
</feature>
<feature type="coiled-coil region" evidence="1">
    <location>
        <begin position="76"/>
        <end position="131"/>
    </location>
</feature>
<feature type="compositionally biased region" description="Low complexity" evidence="3">
    <location>
        <begin position="162"/>
        <end position="176"/>
    </location>
</feature>
<feature type="compositionally biased region" description="Acidic residues" evidence="3">
    <location>
        <begin position="208"/>
        <end position="219"/>
    </location>
</feature>
<gene>
    <name evidence="6" type="primary">IRO3</name>
    <name evidence="5" type="synonym">BHLH063</name>
    <name evidence="10" type="ordered locus">Os03g0379300</name>
    <name evidence="9" type="ordered locus">LOC_Os03g26210</name>
    <name evidence="11" type="ORF">OsJ_11051</name>
    <name evidence="8" type="ORF">OSJNBa0013O08.3</name>
</gene>
<name>IRO3_ORYSJ</name>
<keyword id="KW-0175">Coiled coil</keyword>
<keyword id="KW-0238">DNA-binding</keyword>
<keyword id="KW-0539">Nucleus</keyword>
<keyword id="KW-1185">Reference proteome</keyword>
<keyword id="KW-0346">Stress response</keyword>
<keyword id="KW-0804">Transcription</keyword>
<keyword id="KW-0805">Transcription regulation</keyword>
<protein>
    <recommendedName>
        <fullName evidence="6">Protein IRON-RELATED TRANSCRIPTION FACTOR 3</fullName>
        <shortName evidence="6">OsIRO2</shortName>
    </recommendedName>
    <alternativeName>
        <fullName evidence="5">Basic helix-loop-helix protein 63</fullName>
        <shortName evidence="5">OsbHLH063</shortName>
    </alternativeName>
    <alternativeName>
        <fullName evidence="7">Transcription factor BHLH063</fullName>
    </alternativeName>
    <alternativeName>
        <fullName evidence="7">bHLH transcription factor bHLH063</fullName>
    </alternativeName>
</protein>
<organism>
    <name type="scientific">Oryza sativa subsp. japonica</name>
    <name type="common">Rice</name>
    <dbReference type="NCBI Taxonomy" id="39947"/>
    <lineage>
        <taxon>Eukaryota</taxon>
        <taxon>Viridiplantae</taxon>
        <taxon>Streptophyta</taxon>
        <taxon>Embryophyta</taxon>
        <taxon>Tracheophyta</taxon>
        <taxon>Spermatophyta</taxon>
        <taxon>Magnoliopsida</taxon>
        <taxon>Liliopsida</taxon>
        <taxon>Poales</taxon>
        <taxon>Poaceae</taxon>
        <taxon>BOP clade</taxon>
        <taxon>Oryzoideae</taxon>
        <taxon>Oryzeae</taxon>
        <taxon>Oryzinae</taxon>
        <taxon>Oryza</taxon>
        <taxon>Oryza sativa</taxon>
    </lineage>
</organism>
<evidence type="ECO:0000255" key="1"/>
<evidence type="ECO:0000255" key="2">
    <source>
        <dbReference type="PROSITE-ProRule" id="PRU00981"/>
    </source>
</evidence>
<evidence type="ECO:0000256" key="3">
    <source>
        <dbReference type="SAM" id="MobiDB-lite"/>
    </source>
</evidence>
<evidence type="ECO:0000269" key="4">
    <source>
    </source>
</evidence>
<evidence type="ECO:0000303" key="5">
    <source>
    </source>
</evidence>
<evidence type="ECO:0000303" key="6">
    <source>
    </source>
</evidence>
<evidence type="ECO:0000305" key="7"/>
<evidence type="ECO:0000312" key="8">
    <source>
        <dbReference type="EMBL" id="AAL58252.1"/>
    </source>
</evidence>
<evidence type="ECO:0000312" key="9">
    <source>
        <dbReference type="EMBL" id="ABF96248.1"/>
    </source>
</evidence>
<evidence type="ECO:0000312" key="10">
    <source>
        <dbReference type="EMBL" id="BAF12148.1"/>
    </source>
</evidence>
<evidence type="ECO:0000312" key="11">
    <source>
        <dbReference type="EMBL" id="EEE59148.1"/>
    </source>
</evidence>
<accession>Q10KL8</accession>
<accession>Q8W397</accession>
<comment type="function">
    <text evidence="4">Transcription factor that acts as a negative regulator of the iron deficiency response (PubMed:20699001). Suppresses the induction of iron deficiency responsive genes, such as NAS1, NAS2, IRO2, IRT1, YSL15, and NRAMP1 (PubMed:20699001).</text>
</comment>
<comment type="subcellular location">
    <subcellularLocation>
        <location evidence="2 4">Nucleus</location>
    </subcellularLocation>
</comment>
<comment type="induction">
    <text evidence="4">Strongly induced by iron deficiency, both in roots and shoots.</text>
</comment>
<comment type="miscellaneous">
    <text evidence="4">Plants overexpressing IRO3 are hypersensitive to iron deficiency.</text>
</comment>
<comment type="similarity">
    <text evidence="7">Belongs to the bHLH protein family.</text>
</comment>